<comment type="subcellular location">
    <subcellularLocation>
        <location>Nucleus</location>
    </subcellularLocation>
</comment>
<dbReference type="EMBL" id="AL590444">
    <property type="protein sequence ID" value="CAD25291.1"/>
    <property type="molecule type" value="Genomic_DNA"/>
</dbReference>
<dbReference type="EMBL" id="BK001345">
    <property type="protein sequence ID" value="DAA01308.1"/>
    <property type="molecule type" value="Genomic_DNA"/>
</dbReference>
<dbReference type="RefSeq" id="NP_584787.1">
    <property type="nucleotide sequence ID" value="NM_001041137.1"/>
</dbReference>
<dbReference type="SMR" id="Q8SVT3"/>
<dbReference type="GeneID" id="858935"/>
<dbReference type="KEGG" id="ecu:ECU04_1030"/>
<dbReference type="VEuPathDB" id="MicrosporidiaDB:ECU04_1030"/>
<dbReference type="HOGENOM" id="CLU_1928233_0_0_1"/>
<dbReference type="InParanoid" id="Q8SVT3"/>
<dbReference type="OrthoDB" id="6159439at2759"/>
<dbReference type="Proteomes" id="UP000000819">
    <property type="component" value="Chromosome IV"/>
</dbReference>
<dbReference type="GO" id="GO:0005634">
    <property type="term" value="C:nucleus"/>
    <property type="evidence" value="ECO:0007669"/>
    <property type="project" value="UniProtKB-SubCell"/>
</dbReference>
<dbReference type="GO" id="GO:0000981">
    <property type="term" value="F:DNA-binding transcription factor activity, RNA polymerase II-specific"/>
    <property type="evidence" value="ECO:0007669"/>
    <property type="project" value="InterPro"/>
</dbReference>
<dbReference type="GO" id="GO:0000976">
    <property type="term" value="F:transcription cis-regulatory region binding"/>
    <property type="evidence" value="ECO:0007669"/>
    <property type="project" value="TreeGrafter"/>
</dbReference>
<dbReference type="CDD" id="cd00086">
    <property type="entry name" value="homeodomain"/>
    <property type="match status" value="1"/>
</dbReference>
<dbReference type="Gene3D" id="1.10.10.60">
    <property type="entry name" value="Homeodomain-like"/>
    <property type="match status" value="1"/>
</dbReference>
<dbReference type="InterPro" id="IPR001356">
    <property type="entry name" value="HD"/>
</dbReference>
<dbReference type="InterPro" id="IPR017970">
    <property type="entry name" value="Homeobox_CS"/>
</dbReference>
<dbReference type="InterPro" id="IPR051775">
    <property type="entry name" value="Homeobox_domain"/>
</dbReference>
<dbReference type="InterPro" id="IPR009057">
    <property type="entry name" value="Homeodomain-like_sf"/>
</dbReference>
<dbReference type="PANTHER" id="PTHR24323">
    <property type="entry name" value="CEH-10 HOMEODOMAIN-CONTAINING HOMOLOG"/>
    <property type="match status" value="1"/>
</dbReference>
<dbReference type="PANTHER" id="PTHR24323:SF7">
    <property type="entry name" value="HOMEOBOX DOMAIN-CONTAINING PROTEIN"/>
    <property type="match status" value="1"/>
</dbReference>
<dbReference type="Pfam" id="PF00046">
    <property type="entry name" value="Homeodomain"/>
    <property type="match status" value="1"/>
</dbReference>
<dbReference type="SMART" id="SM00389">
    <property type="entry name" value="HOX"/>
    <property type="match status" value="1"/>
</dbReference>
<dbReference type="SUPFAM" id="SSF46689">
    <property type="entry name" value="Homeodomain-like"/>
    <property type="match status" value="1"/>
</dbReference>
<dbReference type="PROSITE" id="PS00027">
    <property type="entry name" value="HOMEOBOX_1"/>
    <property type="match status" value="1"/>
</dbReference>
<dbReference type="PROSITE" id="PS50071">
    <property type="entry name" value="HOMEOBOX_2"/>
    <property type="match status" value="1"/>
</dbReference>
<organism>
    <name type="scientific">Encephalitozoon cuniculi (strain GB-M1)</name>
    <name type="common">Microsporidian parasite</name>
    <dbReference type="NCBI Taxonomy" id="284813"/>
    <lineage>
        <taxon>Eukaryota</taxon>
        <taxon>Fungi</taxon>
        <taxon>Fungi incertae sedis</taxon>
        <taxon>Microsporidia</taxon>
        <taxon>Unikaryonidae</taxon>
        <taxon>Encephalitozoon</taxon>
    </lineage>
</organism>
<name>HD5_ENCCU</name>
<keyword id="KW-0238">DNA-binding</keyword>
<keyword id="KW-0371">Homeobox</keyword>
<keyword id="KW-0539">Nucleus</keyword>
<keyword id="KW-1185">Reference proteome</keyword>
<sequence>MSIRSKFNKDEKKFVKFIDSTEEIIKHLNKSDSSKRSRLKLSGQQIDVLESNFKIDSHPNSATKSLLSNALSIPLKNIQIWFQNRRAKEKTARDGGRRRSGNAEIEDGEYEHGKMSYQAMCPFDFPPQERYFL</sequence>
<feature type="chain" id="PRO_0000048914" description="Homeobox protein HD-5">
    <location>
        <begin position="1"/>
        <end position="133"/>
    </location>
</feature>
<feature type="DNA-binding region" description="Homeobox" evidence="1">
    <location>
        <begin position="34"/>
        <end position="93"/>
    </location>
</feature>
<feature type="region of interest" description="Disordered" evidence="2">
    <location>
        <begin position="86"/>
        <end position="109"/>
    </location>
</feature>
<evidence type="ECO:0000255" key="1">
    <source>
        <dbReference type="PROSITE-ProRule" id="PRU00108"/>
    </source>
</evidence>
<evidence type="ECO:0000256" key="2">
    <source>
        <dbReference type="SAM" id="MobiDB-lite"/>
    </source>
</evidence>
<reference key="1">
    <citation type="journal article" date="2001" name="Nature">
        <title>Genome sequence and gene compaction of the eukaryote parasite Encephalitozoon cuniculi.</title>
        <authorList>
            <person name="Katinka M.D."/>
            <person name="Duprat S."/>
            <person name="Cornillot E."/>
            <person name="Metenier G."/>
            <person name="Thomarat F."/>
            <person name="Prensier G."/>
            <person name="Barbe V."/>
            <person name="Peyretaillade E."/>
            <person name="Brottier P."/>
            <person name="Wincker P."/>
            <person name="Delbac F."/>
            <person name="El Alaoui H."/>
            <person name="Peyret P."/>
            <person name="Saurin W."/>
            <person name="Gouy M."/>
            <person name="Weissenbach J."/>
            <person name="Vivares C.P."/>
        </authorList>
    </citation>
    <scope>NUCLEOTIDE SEQUENCE [LARGE SCALE GENOMIC DNA]</scope>
    <source>
        <strain>GB-M1</strain>
    </source>
</reference>
<reference key="2">
    <citation type="journal article" date="2003" name="Dev. Genes Evol.">
        <title>The homeobox genes of Encephalitozoon cuniculi (Microsporidia) reveal a putative mating-type locus.</title>
        <authorList>
            <person name="Buerglin T.R."/>
        </authorList>
    </citation>
    <scope>DISCUSSION OF SEQUENCE</scope>
</reference>
<protein>
    <recommendedName>
        <fullName>Homeobox protein HD-5</fullName>
    </recommendedName>
    <alternativeName>
        <fullName>EcHD-5</fullName>
    </alternativeName>
</protein>
<accession>Q8SVT3</accession>
<accession>Q7SI84</accession>
<gene>
    <name type="primary">HD-5</name>
    <name type="ordered locus">ECU04_1030</name>
</gene>
<proteinExistence type="predicted"/>